<dbReference type="EC" id="4.1.1.37" evidence="1"/>
<dbReference type="EMBL" id="CP000480">
    <property type="protein sequence ID" value="ABK69905.1"/>
    <property type="molecule type" value="Genomic_DNA"/>
</dbReference>
<dbReference type="EMBL" id="CP001663">
    <property type="protein sequence ID" value="AFP39179.1"/>
    <property type="molecule type" value="Genomic_DNA"/>
</dbReference>
<dbReference type="RefSeq" id="WP_011728579.1">
    <property type="nucleotide sequence ID" value="NZ_SIJM01000032.1"/>
</dbReference>
<dbReference type="RefSeq" id="YP_887111.1">
    <property type="nucleotide sequence ID" value="NC_008596.1"/>
</dbReference>
<dbReference type="SMR" id="A0QW23"/>
<dbReference type="STRING" id="246196.MSMEG_2780"/>
<dbReference type="PaxDb" id="246196-MSMEI_2711"/>
<dbReference type="GeneID" id="93457560"/>
<dbReference type="KEGG" id="msb:LJ00_13820"/>
<dbReference type="KEGG" id="msg:MSMEI_2711"/>
<dbReference type="KEGG" id="msm:MSMEG_2780"/>
<dbReference type="PATRIC" id="fig|246196.19.peg.2748"/>
<dbReference type="eggNOG" id="COG0407">
    <property type="taxonomic scope" value="Bacteria"/>
</dbReference>
<dbReference type="OrthoDB" id="9806656at2"/>
<dbReference type="UniPathway" id="UPA00251">
    <property type="reaction ID" value="UER00321"/>
</dbReference>
<dbReference type="Proteomes" id="UP000000757">
    <property type="component" value="Chromosome"/>
</dbReference>
<dbReference type="Proteomes" id="UP000006158">
    <property type="component" value="Chromosome"/>
</dbReference>
<dbReference type="GO" id="GO:0005829">
    <property type="term" value="C:cytosol"/>
    <property type="evidence" value="ECO:0007669"/>
    <property type="project" value="TreeGrafter"/>
</dbReference>
<dbReference type="GO" id="GO:0004853">
    <property type="term" value="F:uroporphyrinogen decarboxylase activity"/>
    <property type="evidence" value="ECO:0007669"/>
    <property type="project" value="UniProtKB-UniRule"/>
</dbReference>
<dbReference type="GO" id="GO:0006782">
    <property type="term" value="P:protoporphyrinogen IX biosynthetic process"/>
    <property type="evidence" value="ECO:0007669"/>
    <property type="project" value="UniProtKB-UniRule"/>
</dbReference>
<dbReference type="CDD" id="cd00717">
    <property type="entry name" value="URO-D"/>
    <property type="match status" value="1"/>
</dbReference>
<dbReference type="Gene3D" id="3.20.20.210">
    <property type="match status" value="1"/>
</dbReference>
<dbReference type="HAMAP" id="MF_00218">
    <property type="entry name" value="URO_D"/>
    <property type="match status" value="1"/>
</dbReference>
<dbReference type="InterPro" id="IPR038071">
    <property type="entry name" value="UROD/MetE-like_sf"/>
</dbReference>
<dbReference type="InterPro" id="IPR006361">
    <property type="entry name" value="Uroporphyrinogen_deCO2ase_HemE"/>
</dbReference>
<dbReference type="InterPro" id="IPR000257">
    <property type="entry name" value="Uroporphyrinogen_deCOase"/>
</dbReference>
<dbReference type="NCBIfam" id="TIGR01464">
    <property type="entry name" value="hemE"/>
    <property type="match status" value="1"/>
</dbReference>
<dbReference type="PANTHER" id="PTHR21091">
    <property type="entry name" value="METHYLTETRAHYDROFOLATE:HOMOCYSTEINE METHYLTRANSFERASE RELATED"/>
    <property type="match status" value="1"/>
</dbReference>
<dbReference type="PANTHER" id="PTHR21091:SF169">
    <property type="entry name" value="UROPORPHYRINOGEN DECARBOXYLASE"/>
    <property type="match status" value="1"/>
</dbReference>
<dbReference type="Pfam" id="PF01208">
    <property type="entry name" value="URO-D"/>
    <property type="match status" value="1"/>
</dbReference>
<dbReference type="SUPFAM" id="SSF51726">
    <property type="entry name" value="UROD/MetE-like"/>
    <property type="match status" value="1"/>
</dbReference>
<dbReference type="PROSITE" id="PS00906">
    <property type="entry name" value="UROD_1"/>
    <property type="match status" value="1"/>
</dbReference>
<dbReference type="PROSITE" id="PS00907">
    <property type="entry name" value="UROD_2"/>
    <property type="match status" value="1"/>
</dbReference>
<comment type="function">
    <text evidence="1">Catalyzes the decarboxylation of four acetate groups of uroporphyrinogen-III to yield coproporphyrinogen-III.</text>
</comment>
<comment type="catalytic activity">
    <reaction evidence="1">
        <text>uroporphyrinogen III + 4 H(+) = coproporphyrinogen III + 4 CO2</text>
        <dbReference type="Rhea" id="RHEA:19865"/>
        <dbReference type="ChEBI" id="CHEBI:15378"/>
        <dbReference type="ChEBI" id="CHEBI:16526"/>
        <dbReference type="ChEBI" id="CHEBI:57308"/>
        <dbReference type="ChEBI" id="CHEBI:57309"/>
        <dbReference type="EC" id="4.1.1.37"/>
    </reaction>
</comment>
<comment type="pathway">
    <text evidence="1">Porphyrin-containing compound metabolism; protoporphyrin-IX biosynthesis; coproporphyrinogen-III from 5-aminolevulinate: step 4/4.</text>
</comment>
<comment type="subunit">
    <text evidence="1">Homodimer.</text>
</comment>
<comment type="subcellular location">
    <subcellularLocation>
        <location evidence="1">Cytoplasm</location>
    </subcellularLocation>
</comment>
<comment type="similarity">
    <text evidence="1">Belongs to the uroporphyrinogen decarboxylase family.</text>
</comment>
<feature type="chain" id="PRO_1000023921" description="Uroporphyrinogen decarboxylase">
    <location>
        <begin position="1"/>
        <end position="353"/>
    </location>
</feature>
<feature type="binding site" evidence="1">
    <location>
        <begin position="30"/>
        <end position="34"/>
    </location>
    <ligand>
        <name>substrate</name>
    </ligand>
</feature>
<feature type="binding site" evidence="1">
    <location>
        <position position="79"/>
    </location>
    <ligand>
        <name>substrate</name>
    </ligand>
</feature>
<feature type="binding site" evidence="1">
    <location>
        <position position="154"/>
    </location>
    <ligand>
        <name>substrate</name>
    </ligand>
</feature>
<feature type="binding site" evidence="1">
    <location>
        <position position="209"/>
    </location>
    <ligand>
        <name>substrate</name>
    </ligand>
</feature>
<feature type="binding site" evidence="1">
    <location>
        <position position="332"/>
    </location>
    <ligand>
        <name>substrate</name>
    </ligand>
</feature>
<feature type="site" description="Transition state stabilizer" evidence="1">
    <location>
        <position position="79"/>
    </location>
</feature>
<keyword id="KW-0963">Cytoplasm</keyword>
<keyword id="KW-0210">Decarboxylase</keyword>
<keyword id="KW-0456">Lyase</keyword>
<keyword id="KW-0627">Porphyrin biosynthesis</keyword>
<keyword id="KW-1185">Reference proteome</keyword>
<accession>A0QW23</accession>
<accession>I7G9G0</accession>
<evidence type="ECO:0000255" key="1">
    <source>
        <dbReference type="HAMAP-Rule" id="MF_00218"/>
    </source>
</evidence>
<name>DCUP_MYCS2</name>
<proteinExistence type="evidence at protein level"/>
<sequence>MNTRRELPESPYLAAASGRSPHRVPVWFMRQAGRSLPEYRELRAQHRMLQACFDAELVCEITMQPVRRHKVDAAILFSDIVVPLKAAGIGLDIVPDVGPVIDNPIRTLGDVQAMPALESPQVAPVAEAVRLLTAELGDVPLIGFAGAPFTLASYLVEGGPSRHHERTKAMMLGESSTWHALMTALTDLTIAFLQAQVDAGVDALQVFDSWAGTLSLTDYREYVLPHSSRVFATMAAAGVPMTHFGVGTAELLGAMSEALAPGAARVVGVDWRTSLADAAARVLPGAALQGNLDPVVLLAGWPVVEKAVRRVVEDGRAAVAAGAAGHIFNLGHGVLPATDPGIITDAVELVHSL</sequence>
<reference key="1">
    <citation type="submission" date="2006-10" db="EMBL/GenBank/DDBJ databases">
        <authorList>
            <person name="Fleischmann R.D."/>
            <person name="Dodson R.J."/>
            <person name="Haft D.H."/>
            <person name="Merkel J.S."/>
            <person name="Nelson W.C."/>
            <person name="Fraser C.M."/>
        </authorList>
    </citation>
    <scope>NUCLEOTIDE SEQUENCE [LARGE SCALE GENOMIC DNA]</scope>
    <source>
        <strain>ATCC 700084 / mc(2)155</strain>
    </source>
</reference>
<reference key="2">
    <citation type="journal article" date="2007" name="Genome Biol.">
        <title>Interrupted coding sequences in Mycobacterium smegmatis: authentic mutations or sequencing errors?</title>
        <authorList>
            <person name="Deshayes C."/>
            <person name="Perrodou E."/>
            <person name="Gallien S."/>
            <person name="Euphrasie D."/>
            <person name="Schaeffer C."/>
            <person name="Van-Dorsselaer A."/>
            <person name="Poch O."/>
            <person name="Lecompte O."/>
            <person name="Reyrat J.-M."/>
        </authorList>
    </citation>
    <scope>NUCLEOTIDE SEQUENCE [LARGE SCALE GENOMIC DNA]</scope>
    <source>
        <strain>ATCC 700084 / mc(2)155</strain>
    </source>
</reference>
<reference key="3">
    <citation type="journal article" date="2009" name="Genome Res.">
        <title>Ortho-proteogenomics: multiple proteomes investigation through orthology and a new MS-based protocol.</title>
        <authorList>
            <person name="Gallien S."/>
            <person name="Perrodou E."/>
            <person name="Carapito C."/>
            <person name="Deshayes C."/>
            <person name="Reyrat J.-M."/>
            <person name="Van Dorsselaer A."/>
            <person name="Poch O."/>
            <person name="Schaeffer C."/>
            <person name="Lecompte O."/>
        </authorList>
    </citation>
    <scope>NUCLEOTIDE SEQUENCE [LARGE SCALE GENOMIC DNA]</scope>
    <scope>IDENTIFICATION BY MASS SPECTROMETRY [LARGE SCALE ANALYSIS]</scope>
    <source>
        <strain>ATCC 700084 / mc(2)155</strain>
    </source>
</reference>
<protein>
    <recommendedName>
        <fullName evidence="1">Uroporphyrinogen decarboxylase</fullName>
        <shortName evidence="1">UPD</shortName>
        <shortName evidence="1">URO-D</shortName>
        <ecNumber evidence="1">4.1.1.37</ecNumber>
    </recommendedName>
</protein>
<gene>
    <name evidence="1" type="primary">hemE</name>
    <name type="ordered locus">MSMEG_2780</name>
    <name type="ordered locus">MSMEI_2711</name>
</gene>
<organism>
    <name type="scientific">Mycolicibacterium smegmatis (strain ATCC 700084 / mc(2)155)</name>
    <name type="common">Mycobacterium smegmatis</name>
    <dbReference type="NCBI Taxonomy" id="246196"/>
    <lineage>
        <taxon>Bacteria</taxon>
        <taxon>Bacillati</taxon>
        <taxon>Actinomycetota</taxon>
        <taxon>Actinomycetes</taxon>
        <taxon>Mycobacteriales</taxon>
        <taxon>Mycobacteriaceae</taxon>
        <taxon>Mycolicibacterium</taxon>
    </lineage>
</organism>